<sequence>MSKFNRMHLIVLDSVGIGAAPDANNFVNAGVPDGASDTLGHISKTVGLNVPNMAKLGLGNIPREQPLKTVPAESNPTGYATKLEEVSLGKDTMTGHWEIMGLNITEPFDTFWNGFPEEILTQIEEFSGRKVIRESNRPYSGTAVIDDFGPRQMETGELIIYTSADPVLQIAAHEDIIPVEELYRICEFARSITLERPALLGRIIARPYVGEPGNFTRTSNRRDLAISPFAPTVLDKLNEAGIDTYSVGKISDIFNGEGINHDMGHNKSNNHGVDNLIKAMTSEDFKHGFSFTNLVDFDALYGHRRNPQGYRDCLHEFDERLPEIIAAMKEDDLLMITADHGNDPTYAGTDHTREYIPFLAYSPSFKSSGLIPVGHFADISATIADNFGVEKAMIGESFLDKLV</sequence>
<dbReference type="EC" id="5.4.2.7" evidence="1"/>
<dbReference type="EMBL" id="AJ251799">
    <property type="protein sequence ID" value="CAC21180.1"/>
    <property type="molecule type" value="Genomic_DNA"/>
</dbReference>
<dbReference type="EMBL" id="AF448249">
    <property type="protein sequence ID" value="AAM93387.1"/>
    <property type="molecule type" value="Genomic_DNA"/>
</dbReference>
<dbReference type="RefSeq" id="WP_002948787.1">
    <property type="nucleotide sequence ID" value="NZ_RIVR01000058.1"/>
</dbReference>
<dbReference type="RefSeq" id="WP_014608357.1">
    <property type="nucleotide sequence ID" value="NZ_WMLD01000003.1"/>
</dbReference>
<dbReference type="SMR" id="Q9EUQ2"/>
<dbReference type="PATRIC" id="fig|1308.47.peg.1084"/>
<dbReference type="eggNOG" id="COG1015">
    <property type="taxonomic scope" value="Bacteria"/>
</dbReference>
<dbReference type="UniPathway" id="UPA00002">
    <property type="reaction ID" value="UER00467"/>
</dbReference>
<dbReference type="GO" id="GO:0005829">
    <property type="term" value="C:cytosol"/>
    <property type="evidence" value="ECO:0007669"/>
    <property type="project" value="TreeGrafter"/>
</dbReference>
<dbReference type="GO" id="GO:0000287">
    <property type="term" value="F:magnesium ion binding"/>
    <property type="evidence" value="ECO:0007669"/>
    <property type="project" value="InterPro"/>
</dbReference>
<dbReference type="GO" id="GO:0030145">
    <property type="term" value="F:manganese ion binding"/>
    <property type="evidence" value="ECO:0007669"/>
    <property type="project" value="UniProtKB-UniRule"/>
</dbReference>
<dbReference type="GO" id="GO:0008973">
    <property type="term" value="F:phosphopentomutase activity"/>
    <property type="evidence" value="ECO:0007669"/>
    <property type="project" value="UniProtKB-UniRule"/>
</dbReference>
<dbReference type="GO" id="GO:0006018">
    <property type="term" value="P:2-deoxyribose 1-phosphate catabolic process"/>
    <property type="evidence" value="ECO:0007669"/>
    <property type="project" value="UniProtKB-UniRule"/>
</dbReference>
<dbReference type="GO" id="GO:0006015">
    <property type="term" value="P:5-phosphoribose 1-diphosphate biosynthetic process"/>
    <property type="evidence" value="ECO:0007669"/>
    <property type="project" value="UniProtKB-UniPathway"/>
</dbReference>
<dbReference type="GO" id="GO:0043094">
    <property type="term" value="P:metabolic compound salvage"/>
    <property type="evidence" value="ECO:0007669"/>
    <property type="project" value="InterPro"/>
</dbReference>
<dbReference type="GO" id="GO:0009117">
    <property type="term" value="P:nucleotide metabolic process"/>
    <property type="evidence" value="ECO:0007669"/>
    <property type="project" value="InterPro"/>
</dbReference>
<dbReference type="CDD" id="cd16009">
    <property type="entry name" value="PPM"/>
    <property type="match status" value="1"/>
</dbReference>
<dbReference type="FunFam" id="3.30.70.1250:FF:000001">
    <property type="entry name" value="Phosphopentomutase"/>
    <property type="match status" value="1"/>
</dbReference>
<dbReference type="Gene3D" id="3.40.720.10">
    <property type="entry name" value="Alkaline Phosphatase, subunit A"/>
    <property type="match status" value="1"/>
</dbReference>
<dbReference type="Gene3D" id="3.30.70.1250">
    <property type="entry name" value="Phosphopentomutase"/>
    <property type="match status" value="1"/>
</dbReference>
<dbReference type="HAMAP" id="MF_00740">
    <property type="entry name" value="Phosphopentomut"/>
    <property type="match status" value="1"/>
</dbReference>
<dbReference type="InterPro" id="IPR017850">
    <property type="entry name" value="Alkaline_phosphatase_core_sf"/>
</dbReference>
<dbReference type="InterPro" id="IPR010045">
    <property type="entry name" value="DeoB"/>
</dbReference>
<dbReference type="InterPro" id="IPR006124">
    <property type="entry name" value="Metalloenzyme"/>
</dbReference>
<dbReference type="InterPro" id="IPR024052">
    <property type="entry name" value="Phosphopentomutase_DeoB_cap_sf"/>
</dbReference>
<dbReference type="NCBIfam" id="TIGR01696">
    <property type="entry name" value="deoB"/>
    <property type="match status" value="1"/>
</dbReference>
<dbReference type="NCBIfam" id="NF003766">
    <property type="entry name" value="PRK05362.1"/>
    <property type="match status" value="1"/>
</dbReference>
<dbReference type="PANTHER" id="PTHR21110">
    <property type="entry name" value="PHOSPHOPENTOMUTASE"/>
    <property type="match status" value="1"/>
</dbReference>
<dbReference type="PANTHER" id="PTHR21110:SF0">
    <property type="entry name" value="PHOSPHOPENTOMUTASE"/>
    <property type="match status" value="1"/>
</dbReference>
<dbReference type="Pfam" id="PF01676">
    <property type="entry name" value="Metalloenzyme"/>
    <property type="match status" value="1"/>
</dbReference>
<dbReference type="PIRSF" id="PIRSF001491">
    <property type="entry name" value="Ppentomutase"/>
    <property type="match status" value="1"/>
</dbReference>
<dbReference type="SUPFAM" id="SSF53649">
    <property type="entry name" value="Alkaline phosphatase-like"/>
    <property type="match status" value="1"/>
</dbReference>
<dbReference type="SUPFAM" id="SSF143856">
    <property type="entry name" value="DeoB insert domain-like"/>
    <property type="match status" value="1"/>
</dbReference>
<protein>
    <recommendedName>
        <fullName evidence="1">Phosphopentomutase</fullName>
        <ecNumber evidence="1">5.4.2.7</ecNumber>
    </recommendedName>
    <alternativeName>
        <fullName evidence="1">Phosphodeoxyribomutase</fullName>
    </alternativeName>
</protein>
<organism>
    <name type="scientific">Streptococcus thermophilus</name>
    <dbReference type="NCBI Taxonomy" id="1308"/>
    <lineage>
        <taxon>Bacteria</taxon>
        <taxon>Bacillati</taxon>
        <taxon>Bacillota</taxon>
        <taxon>Bacilli</taxon>
        <taxon>Lactobacillales</taxon>
        <taxon>Streptococcaceae</taxon>
        <taxon>Streptococcus</taxon>
    </lineage>
</organism>
<reference key="1">
    <citation type="submission" date="2000-01" db="EMBL/GenBank/DDBJ databases">
        <title>Cloning and sequence analysis of a region involved in nucleotide metabolism in Streptococcus thermophilus.</title>
        <authorList>
            <person name="Almiron-Roig E."/>
            <person name="Griffin A.M."/>
            <person name="Gasson M.J."/>
        </authorList>
    </citation>
    <scope>NUCLEOTIDE SEQUENCE [GENOMIC DNA]</scope>
    <source>
        <strain>ATCC BAA-250 / LMG 18311</strain>
    </source>
</reference>
<reference key="2">
    <citation type="journal article" date="2003" name="J. Dairy Sci.">
        <title>Biochemistry, genetics, and applications of exopolysaccharide production in Streptococcus thermophilus: a review.</title>
        <authorList>
            <person name="Broadbent J.R."/>
            <person name="McMahon D.J."/>
            <person name="Welker D.L."/>
            <person name="Oberg C.J."/>
            <person name="Moineau S."/>
        </authorList>
    </citation>
    <scope>NUCLEOTIDE SEQUENCE [GENOMIC DNA]</scope>
    <source>
        <strain>MR-1C</strain>
    </source>
</reference>
<evidence type="ECO:0000255" key="1">
    <source>
        <dbReference type="HAMAP-Rule" id="MF_00740"/>
    </source>
</evidence>
<evidence type="ECO:0000305" key="2"/>
<name>DEOB_STRTR</name>
<keyword id="KW-0963">Cytoplasm</keyword>
<keyword id="KW-0413">Isomerase</keyword>
<keyword id="KW-0464">Manganese</keyword>
<keyword id="KW-0479">Metal-binding</keyword>
<comment type="function">
    <text evidence="1">Isomerase that catalyzes the conversion of deoxy-ribose 1-phosphate (dRib-1-P) and ribose 1-phosphate (Rib-1-P) to deoxy-ribose 5-phosphate (dRib-5-P) and ribose 5-phosphate (Rib-5-P), respectively.</text>
</comment>
<comment type="catalytic activity">
    <reaction evidence="1">
        <text>2-deoxy-alpha-D-ribose 1-phosphate = 2-deoxy-D-ribose 5-phosphate</text>
        <dbReference type="Rhea" id="RHEA:27658"/>
        <dbReference type="ChEBI" id="CHEBI:57259"/>
        <dbReference type="ChEBI" id="CHEBI:62877"/>
        <dbReference type="EC" id="5.4.2.7"/>
    </reaction>
</comment>
<comment type="catalytic activity">
    <reaction evidence="1">
        <text>alpha-D-ribose 1-phosphate = D-ribose 5-phosphate</text>
        <dbReference type="Rhea" id="RHEA:18793"/>
        <dbReference type="ChEBI" id="CHEBI:57720"/>
        <dbReference type="ChEBI" id="CHEBI:78346"/>
        <dbReference type="EC" id="5.4.2.7"/>
    </reaction>
</comment>
<comment type="cofactor">
    <cofactor evidence="1">
        <name>Mn(2+)</name>
        <dbReference type="ChEBI" id="CHEBI:29035"/>
    </cofactor>
    <text evidence="1">Binds 2 manganese ions.</text>
</comment>
<comment type="pathway">
    <text evidence="1">Carbohydrate degradation; 2-deoxy-D-ribose 1-phosphate degradation; D-glyceraldehyde 3-phosphate and acetaldehyde from 2-deoxy-alpha-D-ribose 1-phosphate: step 1/2.</text>
</comment>
<comment type="subcellular location">
    <subcellularLocation>
        <location evidence="1">Cytoplasm</location>
    </subcellularLocation>
</comment>
<comment type="similarity">
    <text evidence="1">Belongs to the phosphopentomutase family.</text>
</comment>
<feature type="chain" id="PRO_0000199858" description="Phosphopentomutase">
    <location>
        <begin position="1"/>
        <end position="403"/>
    </location>
</feature>
<feature type="binding site" evidence="1">
    <location>
        <position position="13"/>
    </location>
    <ligand>
        <name>Mn(2+)</name>
        <dbReference type="ChEBI" id="CHEBI:29035"/>
        <label>1</label>
    </ligand>
</feature>
<feature type="binding site" evidence="1">
    <location>
        <position position="298"/>
    </location>
    <ligand>
        <name>Mn(2+)</name>
        <dbReference type="ChEBI" id="CHEBI:29035"/>
        <label>2</label>
    </ligand>
</feature>
<feature type="binding site" evidence="1">
    <location>
        <position position="303"/>
    </location>
    <ligand>
        <name>Mn(2+)</name>
        <dbReference type="ChEBI" id="CHEBI:29035"/>
        <label>2</label>
    </ligand>
</feature>
<feature type="binding site" evidence="1">
    <location>
        <position position="339"/>
    </location>
    <ligand>
        <name>Mn(2+)</name>
        <dbReference type="ChEBI" id="CHEBI:29035"/>
        <label>1</label>
    </ligand>
</feature>
<feature type="binding site" evidence="1">
    <location>
        <position position="340"/>
    </location>
    <ligand>
        <name>Mn(2+)</name>
        <dbReference type="ChEBI" id="CHEBI:29035"/>
        <label>1</label>
    </ligand>
</feature>
<feature type="binding site" evidence="1">
    <location>
        <position position="351"/>
    </location>
    <ligand>
        <name>Mn(2+)</name>
        <dbReference type="ChEBI" id="CHEBI:29035"/>
        <label>2</label>
    </ligand>
</feature>
<feature type="sequence conflict" description="In Ref. 2; AAM93387." evidence="2" ref="2">
    <original>SNR</original>
    <variation>ANK</variation>
    <location>
        <begin position="135"/>
        <end position="137"/>
    </location>
</feature>
<feature type="sequence conflict" description="In Ref. 2; AAM93387." evidence="2" ref="2">
    <original>S</original>
    <variation>C</variation>
    <location>
        <position position="367"/>
    </location>
</feature>
<gene>
    <name evidence="1" type="primary">deoB</name>
</gene>
<proteinExistence type="inferred from homology"/>
<accession>Q9EUQ2</accession>
<accession>Q8KUL6</accession>